<reference key="1">
    <citation type="journal article" date="2004" name="Science">
        <title>The complete genome sequence of Propionibacterium acnes, a commensal of human skin.</title>
        <authorList>
            <person name="Brueggemann H."/>
            <person name="Henne A."/>
            <person name="Hoster F."/>
            <person name="Liesegang H."/>
            <person name="Wiezer A."/>
            <person name="Strittmatter A."/>
            <person name="Hujer S."/>
            <person name="Duerre P."/>
            <person name="Gottschalk G."/>
        </authorList>
    </citation>
    <scope>NUCLEOTIDE SEQUENCE [LARGE SCALE GENOMIC DNA]</scope>
    <source>
        <strain>DSM 16379 / KPA171202</strain>
    </source>
</reference>
<feature type="chain" id="PRO_0000296532" description="Large ribosomal subunit protein bL32">
    <location>
        <begin position="1"/>
        <end position="56"/>
    </location>
</feature>
<feature type="region of interest" description="Disordered" evidence="2">
    <location>
        <begin position="1"/>
        <end position="22"/>
    </location>
</feature>
<feature type="compositionally biased region" description="Basic residues" evidence="2">
    <location>
        <begin position="1"/>
        <end position="19"/>
    </location>
</feature>
<proteinExistence type="inferred from homology"/>
<comment type="similarity">
    <text evidence="1">Belongs to the bacterial ribosomal protein bL32 family.</text>
</comment>
<name>RL32_CUTAK</name>
<organism>
    <name type="scientific">Cutibacterium acnes (strain DSM 16379 / KPA171202)</name>
    <name type="common">Propionibacterium acnes</name>
    <dbReference type="NCBI Taxonomy" id="267747"/>
    <lineage>
        <taxon>Bacteria</taxon>
        <taxon>Bacillati</taxon>
        <taxon>Actinomycetota</taxon>
        <taxon>Actinomycetes</taxon>
        <taxon>Propionibacteriales</taxon>
        <taxon>Propionibacteriaceae</taxon>
        <taxon>Cutibacterium</taxon>
    </lineage>
</organism>
<dbReference type="EMBL" id="AE017283">
    <property type="protein sequence ID" value="AAT83868.1"/>
    <property type="molecule type" value="Genomic_DNA"/>
</dbReference>
<dbReference type="RefSeq" id="WP_002514596.1">
    <property type="nucleotide sequence ID" value="NZ_CP025935.1"/>
</dbReference>
<dbReference type="SMR" id="Q6A5U5"/>
<dbReference type="EnsemblBacteria" id="AAT83868">
    <property type="protein sequence ID" value="AAT83868"/>
    <property type="gene ID" value="PPA2162"/>
</dbReference>
<dbReference type="GeneID" id="92881470"/>
<dbReference type="KEGG" id="pac:PPA2162"/>
<dbReference type="eggNOG" id="ENOG5033AVR">
    <property type="taxonomic scope" value="Bacteria"/>
</dbReference>
<dbReference type="HOGENOM" id="CLU_203263_0_0_11"/>
<dbReference type="Proteomes" id="UP000000603">
    <property type="component" value="Chromosome"/>
</dbReference>
<dbReference type="GO" id="GO:0015934">
    <property type="term" value="C:large ribosomal subunit"/>
    <property type="evidence" value="ECO:0007669"/>
    <property type="project" value="InterPro"/>
</dbReference>
<dbReference type="GO" id="GO:0003735">
    <property type="term" value="F:structural constituent of ribosome"/>
    <property type="evidence" value="ECO:0007669"/>
    <property type="project" value="InterPro"/>
</dbReference>
<dbReference type="GO" id="GO:0006412">
    <property type="term" value="P:translation"/>
    <property type="evidence" value="ECO:0007669"/>
    <property type="project" value="UniProtKB-UniRule"/>
</dbReference>
<dbReference type="HAMAP" id="MF_00340">
    <property type="entry name" value="Ribosomal_bL32"/>
    <property type="match status" value="1"/>
</dbReference>
<dbReference type="InterPro" id="IPR002677">
    <property type="entry name" value="Ribosomal_bL32"/>
</dbReference>
<dbReference type="InterPro" id="IPR011332">
    <property type="entry name" value="Ribosomal_zn-bd"/>
</dbReference>
<dbReference type="NCBIfam" id="TIGR01031">
    <property type="entry name" value="rpmF_bact"/>
    <property type="match status" value="1"/>
</dbReference>
<dbReference type="Pfam" id="PF01783">
    <property type="entry name" value="Ribosomal_L32p"/>
    <property type="match status" value="1"/>
</dbReference>
<dbReference type="SUPFAM" id="SSF57829">
    <property type="entry name" value="Zn-binding ribosomal proteins"/>
    <property type="match status" value="1"/>
</dbReference>
<gene>
    <name evidence="1" type="primary">rpmF</name>
    <name type="ordered locus">PPA2162</name>
</gene>
<protein>
    <recommendedName>
        <fullName evidence="1">Large ribosomal subunit protein bL32</fullName>
    </recommendedName>
    <alternativeName>
        <fullName evidence="3">50S ribosomal protein L32</fullName>
    </alternativeName>
</protein>
<keyword id="KW-0687">Ribonucleoprotein</keyword>
<keyword id="KW-0689">Ribosomal protein</keyword>
<sequence length="56" mass="6538">MAVPKRKKSRSTTRHRRAQWKTTPTQLVEIRVEGKVLRVPRNLVKAYHSGLIDVED</sequence>
<accession>Q6A5U5</accession>
<evidence type="ECO:0000255" key="1">
    <source>
        <dbReference type="HAMAP-Rule" id="MF_00340"/>
    </source>
</evidence>
<evidence type="ECO:0000256" key="2">
    <source>
        <dbReference type="SAM" id="MobiDB-lite"/>
    </source>
</evidence>
<evidence type="ECO:0000305" key="3"/>